<gene>
    <name evidence="1" type="primary">recR</name>
    <name type="ordered locus">SpyM3_1085</name>
</gene>
<comment type="function">
    <text evidence="1">May play a role in DNA repair. It seems to be involved in an RecBC-independent recombinational process of DNA repair. It may act with RecF and RecO.</text>
</comment>
<comment type="similarity">
    <text evidence="1">Belongs to the RecR family.</text>
</comment>
<feature type="chain" id="PRO_0000190401" description="Recombination protein RecR">
    <location>
        <begin position="1"/>
        <end position="198"/>
    </location>
</feature>
<feature type="domain" description="Toprim" evidence="1">
    <location>
        <begin position="80"/>
        <end position="175"/>
    </location>
</feature>
<feature type="zinc finger region" description="C4-type" evidence="1">
    <location>
        <begin position="57"/>
        <end position="72"/>
    </location>
</feature>
<proteinExistence type="inferred from homology"/>
<name>RECR_STRP3</name>
<organism>
    <name type="scientific">Streptococcus pyogenes serotype M3 (strain ATCC BAA-595 / MGAS315)</name>
    <dbReference type="NCBI Taxonomy" id="198466"/>
    <lineage>
        <taxon>Bacteria</taxon>
        <taxon>Bacillati</taxon>
        <taxon>Bacillota</taxon>
        <taxon>Bacilli</taxon>
        <taxon>Lactobacillales</taxon>
        <taxon>Streptococcaceae</taxon>
        <taxon>Streptococcus</taxon>
    </lineage>
</organism>
<evidence type="ECO:0000255" key="1">
    <source>
        <dbReference type="HAMAP-Rule" id="MF_00017"/>
    </source>
</evidence>
<reference key="1">
    <citation type="journal article" date="2002" name="Proc. Natl. Acad. Sci. U.S.A.">
        <title>Genome sequence of a serotype M3 strain of group A Streptococcus: phage-encoded toxins, the high-virulence phenotype, and clone emergence.</title>
        <authorList>
            <person name="Beres S.B."/>
            <person name="Sylva G.L."/>
            <person name="Barbian K.D."/>
            <person name="Lei B."/>
            <person name="Hoff J.S."/>
            <person name="Mammarella N.D."/>
            <person name="Liu M.-Y."/>
            <person name="Smoot J.C."/>
            <person name="Porcella S.F."/>
            <person name="Parkins L.D."/>
            <person name="Campbell D.S."/>
            <person name="Smith T.M."/>
            <person name="McCormick J.K."/>
            <person name="Leung D.Y.M."/>
            <person name="Schlievert P.M."/>
            <person name="Musser J.M."/>
        </authorList>
    </citation>
    <scope>NUCLEOTIDE SEQUENCE [LARGE SCALE GENOMIC DNA]</scope>
    <source>
        <strain>ATCC BAA-595 / MGAS315</strain>
    </source>
</reference>
<dbReference type="EMBL" id="AE014074">
    <property type="protein sequence ID" value="AAM79692.1"/>
    <property type="molecule type" value="Genomic_DNA"/>
</dbReference>
<dbReference type="RefSeq" id="WP_002983939.1">
    <property type="nucleotide sequence ID" value="NC_004070.1"/>
</dbReference>
<dbReference type="SMR" id="P0DD88"/>
<dbReference type="GeneID" id="69900624"/>
<dbReference type="KEGG" id="spg:SpyM3_1085"/>
<dbReference type="HOGENOM" id="CLU_060739_1_0_9"/>
<dbReference type="Proteomes" id="UP000000564">
    <property type="component" value="Chromosome"/>
</dbReference>
<dbReference type="GO" id="GO:0003677">
    <property type="term" value="F:DNA binding"/>
    <property type="evidence" value="ECO:0007669"/>
    <property type="project" value="UniProtKB-UniRule"/>
</dbReference>
<dbReference type="GO" id="GO:0008270">
    <property type="term" value="F:zinc ion binding"/>
    <property type="evidence" value="ECO:0007669"/>
    <property type="project" value="UniProtKB-KW"/>
</dbReference>
<dbReference type="GO" id="GO:0006310">
    <property type="term" value="P:DNA recombination"/>
    <property type="evidence" value="ECO:0007669"/>
    <property type="project" value="UniProtKB-UniRule"/>
</dbReference>
<dbReference type="GO" id="GO:0006281">
    <property type="term" value="P:DNA repair"/>
    <property type="evidence" value="ECO:0007669"/>
    <property type="project" value="UniProtKB-UniRule"/>
</dbReference>
<dbReference type="CDD" id="cd01025">
    <property type="entry name" value="TOPRIM_recR"/>
    <property type="match status" value="1"/>
</dbReference>
<dbReference type="Gene3D" id="3.30.60.80">
    <property type="match status" value="1"/>
</dbReference>
<dbReference type="Gene3D" id="3.40.1360.10">
    <property type="match status" value="1"/>
</dbReference>
<dbReference type="Gene3D" id="6.10.250.240">
    <property type="match status" value="1"/>
</dbReference>
<dbReference type="Gene3D" id="1.10.8.420">
    <property type="entry name" value="RecR Domain 1"/>
    <property type="match status" value="1"/>
</dbReference>
<dbReference type="HAMAP" id="MF_00017">
    <property type="entry name" value="RecR"/>
    <property type="match status" value="1"/>
</dbReference>
<dbReference type="InterPro" id="IPR000093">
    <property type="entry name" value="DNA_Rcmb_RecR"/>
</dbReference>
<dbReference type="InterPro" id="IPR023627">
    <property type="entry name" value="Rcmb_RecR"/>
</dbReference>
<dbReference type="InterPro" id="IPR015967">
    <property type="entry name" value="Rcmb_RecR_Znf"/>
</dbReference>
<dbReference type="InterPro" id="IPR006171">
    <property type="entry name" value="TOPRIM_dom"/>
</dbReference>
<dbReference type="InterPro" id="IPR034137">
    <property type="entry name" value="TOPRIM_RecR"/>
</dbReference>
<dbReference type="NCBIfam" id="TIGR00615">
    <property type="entry name" value="recR"/>
    <property type="match status" value="1"/>
</dbReference>
<dbReference type="PANTHER" id="PTHR30446">
    <property type="entry name" value="RECOMBINATION PROTEIN RECR"/>
    <property type="match status" value="1"/>
</dbReference>
<dbReference type="PANTHER" id="PTHR30446:SF0">
    <property type="entry name" value="RECOMBINATION PROTEIN RECR"/>
    <property type="match status" value="1"/>
</dbReference>
<dbReference type="Pfam" id="PF21175">
    <property type="entry name" value="RecR_C"/>
    <property type="match status" value="1"/>
</dbReference>
<dbReference type="Pfam" id="PF21176">
    <property type="entry name" value="RecR_HhH"/>
    <property type="match status" value="1"/>
</dbReference>
<dbReference type="Pfam" id="PF02132">
    <property type="entry name" value="RecR_ZnF"/>
    <property type="match status" value="1"/>
</dbReference>
<dbReference type="Pfam" id="PF13662">
    <property type="entry name" value="Toprim_4"/>
    <property type="match status" value="1"/>
</dbReference>
<dbReference type="SMART" id="SM00493">
    <property type="entry name" value="TOPRIM"/>
    <property type="match status" value="1"/>
</dbReference>
<dbReference type="SUPFAM" id="SSF111304">
    <property type="entry name" value="Recombination protein RecR"/>
    <property type="match status" value="1"/>
</dbReference>
<dbReference type="PROSITE" id="PS01300">
    <property type="entry name" value="RECR"/>
    <property type="match status" value="1"/>
</dbReference>
<dbReference type="PROSITE" id="PS50880">
    <property type="entry name" value="TOPRIM"/>
    <property type="match status" value="1"/>
</dbReference>
<protein>
    <recommendedName>
        <fullName evidence="1">Recombination protein RecR</fullName>
    </recommendedName>
</protein>
<keyword id="KW-0227">DNA damage</keyword>
<keyword id="KW-0233">DNA recombination</keyword>
<keyword id="KW-0234">DNA repair</keyword>
<keyword id="KW-0479">Metal-binding</keyword>
<keyword id="KW-0862">Zinc</keyword>
<keyword id="KW-0863">Zinc-finger</keyword>
<accession>P0DD88</accession>
<accession>P65995</accession>
<accession>Q99Z33</accession>
<sequence length="198" mass="21645">MLYPTPIAKLIDSYSKLPGIGIKTATRLAFYTIGMSNEDVNDFAKNLLAAKRELTYCSICGNLTDDDPCHICTDTSRDQTTILVVEDAKDVSAMEKIQEYHGYYHVLHGLISPMNGVGPDDINLKSLITRLMDGKVSEVIVATNATADGEATSMYISRVLKPAGIKVTRLARGLAVGSDIEYADEVTLLRAIENRTEL</sequence>